<comment type="function">
    <text evidence="1">Required for rescue of stalled ribosomes mediated by trans-translation. Binds to transfer-messenger RNA (tmRNA), required for stable association of tmRNA with ribosomes. tmRNA and SmpB together mimic tRNA shape, replacing the anticodon stem-loop with SmpB. tmRNA is encoded by the ssrA gene; the 2 termini fold to resemble tRNA(Ala) and it encodes a 'tag peptide', a short internal open reading frame. During trans-translation Ala-aminoacylated tmRNA acts like a tRNA, entering the A-site of stalled ribosomes, displacing the stalled mRNA. The ribosome then switches to translate the ORF on the tmRNA; the nascent peptide is terminated with the 'tag peptide' encoded by the tmRNA and targeted for degradation. The ribosome is freed to recommence translation, which seems to be the essential function of trans-translation.</text>
</comment>
<comment type="subcellular location">
    <subcellularLocation>
        <location evidence="1">Cytoplasm</location>
    </subcellularLocation>
    <text evidence="1">The tmRNA-SmpB complex associates with stalled 70S ribosomes.</text>
</comment>
<comment type="similarity">
    <text evidence="1">Belongs to the SmpB family.</text>
</comment>
<name>SSRP_STAAB</name>
<organism>
    <name type="scientific">Staphylococcus aureus (strain bovine RF122 / ET3-1)</name>
    <dbReference type="NCBI Taxonomy" id="273036"/>
    <lineage>
        <taxon>Bacteria</taxon>
        <taxon>Bacillati</taxon>
        <taxon>Bacillota</taxon>
        <taxon>Bacilli</taxon>
        <taxon>Bacillales</taxon>
        <taxon>Staphylococcaceae</taxon>
        <taxon>Staphylococcus</taxon>
    </lineage>
</organism>
<gene>
    <name evidence="1" type="primary">smpB</name>
    <name type="ordered locus">SAB0737</name>
</gene>
<keyword id="KW-0963">Cytoplasm</keyword>
<keyword id="KW-0694">RNA-binding</keyword>
<sequence>MAKKKSPGTLAENRKARHDYNIEDTIEAGIVLQGTEIKSIRRGSANLKDSYAQVKNGEMYLNNMHIAPYEEGNRFNHDPLRSRKLLLHKREIIKLGDQTREIGYSIVPLKLYLKHGHCKVLLGVARGKKKYDKRQALKEKAVKRDVARDMKARY</sequence>
<reference key="1">
    <citation type="journal article" date="2007" name="PLoS ONE">
        <title>Molecular correlates of host specialization in Staphylococcus aureus.</title>
        <authorList>
            <person name="Herron-Olson L."/>
            <person name="Fitzgerald J.R."/>
            <person name="Musser J.M."/>
            <person name="Kapur V."/>
        </authorList>
    </citation>
    <scope>NUCLEOTIDE SEQUENCE [LARGE SCALE GENOMIC DNA]</scope>
    <source>
        <strain>bovine RF122 / ET3-1</strain>
    </source>
</reference>
<protein>
    <recommendedName>
        <fullName evidence="1">SsrA-binding protein</fullName>
    </recommendedName>
    <alternativeName>
        <fullName evidence="1">Small protein B</fullName>
    </alternativeName>
</protein>
<accession>Q2YWK9</accession>
<dbReference type="EMBL" id="AJ938182">
    <property type="protein sequence ID" value="CAI80425.1"/>
    <property type="molecule type" value="Genomic_DNA"/>
</dbReference>
<dbReference type="RefSeq" id="WP_001085185.1">
    <property type="nucleotide sequence ID" value="NC_007622.1"/>
</dbReference>
<dbReference type="SMR" id="Q2YWK9"/>
<dbReference type="KEGG" id="sab:SAB0737"/>
<dbReference type="HOGENOM" id="CLU_108953_0_0_9"/>
<dbReference type="GO" id="GO:0005829">
    <property type="term" value="C:cytosol"/>
    <property type="evidence" value="ECO:0007669"/>
    <property type="project" value="TreeGrafter"/>
</dbReference>
<dbReference type="GO" id="GO:0003723">
    <property type="term" value="F:RNA binding"/>
    <property type="evidence" value="ECO:0007669"/>
    <property type="project" value="UniProtKB-UniRule"/>
</dbReference>
<dbReference type="GO" id="GO:0070929">
    <property type="term" value="P:trans-translation"/>
    <property type="evidence" value="ECO:0007669"/>
    <property type="project" value="UniProtKB-UniRule"/>
</dbReference>
<dbReference type="CDD" id="cd09294">
    <property type="entry name" value="SmpB"/>
    <property type="match status" value="1"/>
</dbReference>
<dbReference type="Gene3D" id="2.40.280.10">
    <property type="match status" value="1"/>
</dbReference>
<dbReference type="HAMAP" id="MF_00023">
    <property type="entry name" value="SmpB"/>
    <property type="match status" value="1"/>
</dbReference>
<dbReference type="InterPro" id="IPR023620">
    <property type="entry name" value="SmpB"/>
</dbReference>
<dbReference type="InterPro" id="IPR000037">
    <property type="entry name" value="SsrA-bd_prot"/>
</dbReference>
<dbReference type="InterPro" id="IPR020081">
    <property type="entry name" value="SsrA-bd_prot_CS"/>
</dbReference>
<dbReference type="NCBIfam" id="NF003843">
    <property type="entry name" value="PRK05422.1"/>
    <property type="match status" value="1"/>
</dbReference>
<dbReference type="NCBIfam" id="TIGR00086">
    <property type="entry name" value="smpB"/>
    <property type="match status" value="1"/>
</dbReference>
<dbReference type="PANTHER" id="PTHR30308:SF2">
    <property type="entry name" value="SSRA-BINDING PROTEIN"/>
    <property type="match status" value="1"/>
</dbReference>
<dbReference type="PANTHER" id="PTHR30308">
    <property type="entry name" value="TMRNA-BINDING COMPONENT OF TRANS-TRANSLATION TAGGING COMPLEX"/>
    <property type="match status" value="1"/>
</dbReference>
<dbReference type="Pfam" id="PF01668">
    <property type="entry name" value="SmpB"/>
    <property type="match status" value="1"/>
</dbReference>
<dbReference type="SUPFAM" id="SSF74982">
    <property type="entry name" value="Small protein B (SmpB)"/>
    <property type="match status" value="1"/>
</dbReference>
<dbReference type="PROSITE" id="PS01317">
    <property type="entry name" value="SSRP"/>
    <property type="match status" value="1"/>
</dbReference>
<evidence type="ECO:0000255" key="1">
    <source>
        <dbReference type="HAMAP-Rule" id="MF_00023"/>
    </source>
</evidence>
<proteinExistence type="inferred from homology"/>
<feature type="chain" id="PRO_1000002158" description="SsrA-binding protein">
    <location>
        <begin position="1"/>
        <end position="154"/>
    </location>
</feature>